<protein>
    <recommendedName>
        <fullName evidence="6 7">4-chlorobenzoate--CoA ligase</fullName>
        <shortName evidence="9">4-CBA:CoA ligase</shortName>
        <ecNumber>6.2.1.33</ecNumber>
    </recommendedName>
</protein>
<accession>A5JTM6</accession>
<sequence length="528" mass="57151">MQTVHEMLRRAVSRVPHRWAIVDAARSTFDICRTGETSRNEGSATARLWPQPARPLAVVSGNSVEAVIAVLALHRLQAVPALMNPRLKPAEISELVARGEMARAVVANDAGVMEAIRTRVPSVCVLALDDLVSGSRVPEVAGKSLPPPPCEPEQAGFVFYTSGTTGLPKGAVIPQRAAESRVLFMATQAGLRHGSHNVVLGLMPLYHTIGFFAVLVAAMAFDGTYVVVEEFDAGNVLKLIERERVTAMFATPTHLDALTTAVEQAGARLESLEHVTFAGATMPDTVLERVNRFIPGEKVNIYGTTEAMNSLYMRAVRIAGTVMRPGFFSEVRIVRVGGDVDDGCPTVKRASWRWRRRMRPFQATLTNLRLLQKSFRKAGTGRAICVRDGSGNIVVLGRVDDMIISGGENIHPSEVERILAAAPGVAEVVVIGVKDERWGQSVVACVVLQPGASASAERLDAFCRASALADFKRPRRYVFLDELPKSAMNKVLRRQLMQHVSATSSAAVVPAPAVKQRTYAPSGRAIAR</sequence>
<comment type="function">
    <text evidence="3 4 5">Catalyzes the formation of chlorobenzoyl-CoA via a 2 step reaction. First 4-chlorobenzoyl is adenylated by ATP, followed by acyl transfer from the 4-chlorobenzoyl-AMP intermediate to CoA. Benzoate, 4-bromobenzoate, 4-iodobenzoate and 4-methylbenzoate also act as substrates. Inactive towards 4-aminobenzoate, 4-hydroxybenzoate, 2-aminobenzoate, 2,3-dihydroxybenzoate, 4-coumarate and the aliphatic carboxylic acids palmate, caproate, laurate and butyrate. Negligible activity is detected when ATP is replaced by UTP, CTP or GTP as cosubstrate.</text>
</comment>
<comment type="catalytic activity">
    <reaction evidence="3 4 5">
        <text>4-chlorobenzoate + ATP + CoA = 4-chlorobenzoyl-CoA + AMP + diphosphate</text>
        <dbReference type="Rhea" id="RHEA:23220"/>
        <dbReference type="ChEBI" id="CHEBI:17861"/>
        <dbReference type="ChEBI" id="CHEBI:30616"/>
        <dbReference type="ChEBI" id="CHEBI:33019"/>
        <dbReference type="ChEBI" id="CHEBI:57287"/>
        <dbReference type="ChEBI" id="CHEBI:57354"/>
        <dbReference type="ChEBI" id="CHEBI:456215"/>
        <dbReference type="EC" id="6.2.1.33"/>
    </reaction>
</comment>
<comment type="cofactor">
    <cofactor evidence="3 4">
        <name>Mg(2+)</name>
        <dbReference type="ChEBI" id="CHEBI:18420"/>
    </cofactor>
</comment>
<comment type="activity regulation">
    <text evidence="3">Unaffected by 5,5'-dithiobis-(2-nitrobenzoic acid), 4-chloromercuribenzoate and sodium azide. Inhibited by Cu(2+), Fe(2+) and Zn(2+). Unaffected by Na(+), K(+) and Li(+).</text>
</comment>
<comment type="biophysicochemical properties">
    <kinetics>
        <KM evidence="3 4 5">8.5 uM for 4-chlorobenzoate</KM>
        <KM evidence="3 4 5">70 uM for CoA</KM>
        <KM evidence="3 4 5">104 uM for ATP (with magnesium as cofactor)</KM>
        <KM evidence="3 4 5">43 uM for ATP (with manganese as cofactor)</KM>
        <KM evidence="3 4 5">59 uM for ATP (with cobalt as cofactor)</KM>
        <KM evidence="3 4 5">15 uM for 4-bromobenzoate</KM>
        <KM evidence="3 4 5">17 uM for 4-iodobenzoate</KM>
        <KM evidence="3 4 5">700 uM for benzoate</KM>
        <KM evidence="3 4 5">130 uM for 4-methylbenzoate</KM>
    </kinetics>
    <phDependence>
        <text evidence="3 4 5">Optimum pH is 8.4. 85% of activity remains at pH 9.0, 54% of activity remains at pH 7.0.</text>
    </phDependence>
    <temperatureDependence>
        <text evidence="3 4 5">Optimum temperature is 35 degrees Celsius.</text>
    </temperatureDependence>
</comment>
<comment type="pathway">
    <text evidence="4">Xenobiotic degradation; 4-chlorobenzoate degradation; 4-hydroxybenzoate from 4-chlorobenzoate: step 2/3.</text>
</comment>
<comment type="subunit">
    <text evidence="3 4">Homodimer.</text>
</comment>
<comment type="similarity">
    <text evidence="2">Belongs to the ATP-dependent AMP-binding enzyme family.</text>
</comment>
<reference evidence="8" key="1">
    <citation type="journal article" date="1992" name="Biochemistry">
        <title>Ancestry of the 4-chlorobenzoate dehalogenase: analysis of amino acid sequence identities among families of acyl:adenyl ligases, enoyl-CoA hydratases/isomerases, and acyl-CoA thioesterases.</title>
        <authorList>
            <person name="Babbitt P.C."/>
            <person name="Kenyon G.L."/>
            <person name="Martin B.M."/>
            <person name="Charest H."/>
            <person name="Slyvestre M."/>
            <person name="Scholten J.D."/>
            <person name="Chang K.H."/>
            <person name="Liang P.H."/>
            <person name="Dunaway-Mariano D."/>
        </authorList>
    </citation>
    <scope>NUCLEOTIDE SEQUENCE [GENOMIC DNA]</scope>
</reference>
<reference evidence="9" key="2">
    <citation type="submission" date="2007-04" db="EMBL/GenBank/DDBJ databases">
        <title>The nucleotide sequence upstream and downstream of 4-CBA-CoA ORFs in 9.5 kb Pseudomonas sp. strain CBS 3 chromosomal DNA.</title>
        <authorList>
            <person name="Zhang W."/>
            <person name="Dunaway-Mariano D."/>
        </authorList>
    </citation>
    <scope>NUCLEOTIDE SEQUENCE [GENOMIC DNA]</scope>
</reference>
<reference evidence="8" key="3">
    <citation type="journal article" date="1992" name="Biol. Chem. Hoppe-Seyler">
        <title>Purification and properties of 4-halobenzoate-coenzyme A ligase from Pseudomonas sp. CBS3.</title>
        <authorList>
            <person name="Loffler F."/>
            <person name="Muller R."/>
            <person name="Lingens F."/>
        </authorList>
    </citation>
    <scope>PROTEIN SEQUENCE OF 1-16</scope>
    <scope>FUNCTION</scope>
    <scope>CATALYTIC ACTIVITY</scope>
    <scope>COFACTOR</scope>
    <scope>ACTIVITY REGULATION</scope>
    <scope>BIOPHYSICOCHEMICAL PROPERTIES</scope>
    <scope>SUBUNIT</scope>
</reference>
<reference evidence="8" key="4">
    <citation type="journal article" date="1992" name="Biochemistry">
        <title>Isolation and characterization of the three polypeptide components of 4-chlorobenzoate dehalogenase from Pseudomonas sp. strain CBS-3.</title>
        <authorList>
            <person name="Chang K.H."/>
            <person name="Liang P.H."/>
            <person name="Beck W."/>
            <person name="Scholten J.D."/>
            <person name="Dunaway-Mariano D."/>
        </authorList>
    </citation>
    <scope>FUNCTION</scope>
    <scope>CATALYTIC ACTIVITY</scope>
    <scope>COFACTOR</scope>
    <scope>BIOPHYSICOCHEMICAL PROPERTIES</scope>
    <scope>PATHWAY</scope>
    <scope>SUBUNIT</scope>
</reference>
<reference evidence="8" key="5">
    <citation type="journal article" date="1997" name="Biochemistry">
        <title>Acyl-adenylate motif of the acyl-adenylate/thioester-forming enzyme superfamily: a site-directed mutagenesis study with the Pseudomonas sp. strain CBS3 4-chlorobenzoate:coenzyme A ligase.</title>
        <authorList>
            <person name="Chang K.H."/>
            <person name="Xiang H."/>
            <person name="Dunaway-Mariano D."/>
        </authorList>
    </citation>
    <scope>FUNCTION</scope>
    <scope>CATALYTIC ACTIVITY</scope>
    <scope>BIOPHYSICOCHEMICAL PROPERTIES</scope>
    <scope>MUTAGENESIS OF GLY-163; GLY-166; PRO-168; LYS-169 AND GLU-306</scope>
</reference>
<name>CBACL_PSEUC</name>
<dbReference type="EC" id="6.2.1.33"/>
<dbReference type="EMBL" id="EF569604">
    <property type="protein sequence ID" value="ABQ44579.1"/>
    <property type="molecule type" value="Genomic_DNA"/>
</dbReference>
<dbReference type="SMR" id="A5JTM6"/>
<dbReference type="KEGG" id="ag:ABQ44579"/>
<dbReference type="BioCyc" id="MetaCyc:MONOMER-14752"/>
<dbReference type="SABIO-RK" id="A5JTM6"/>
<dbReference type="UniPathway" id="UPA01011">
    <property type="reaction ID" value="UER01021"/>
</dbReference>
<dbReference type="GO" id="GO:0018861">
    <property type="term" value="F:4-chlorobenzoate-CoA ligase activity"/>
    <property type="evidence" value="ECO:0000314"/>
    <property type="project" value="UniProtKB"/>
</dbReference>
<dbReference type="GO" id="GO:0005524">
    <property type="term" value="F:ATP binding"/>
    <property type="evidence" value="ECO:0007669"/>
    <property type="project" value="UniProtKB-KW"/>
</dbReference>
<dbReference type="GO" id="GO:0031956">
    <property type="term" value="F:medium-chain fatty acid-CoA ligase activity"/>
    <property type="evidence" value="ECO:0007669"/>
    <property type="project" value="TreeGrafter"/>
</dbReference>
<dbReference type="GO" id="GO:0006631">
    <property type="term" value="P:fatty acid metabolic process"/>
    <property type="evidence" value="ECO:0007669"/>
    <property type="project" value="TreeGrafter"/>
</dbReference>
<dbReference type="CDD" id="cd05923">
    <property type="entry name" value="CBAL"/>
    <property type="match status" value="1"/>
</dbReference>
<dbReference type="Gene3D" id="3.30.300.30">
    <property type="match status" value="1"/>
</dbReference>
<dbReference type="Gene3D" id="3.40.50.980">
    <property type="match status" value="2"/>
</dbReference>
<dbReference type="InterPro" id="IPR025110">
    <property type="entry name" value="AMP-bd_C"/>
</dbReference>
<dbReference type="InterPro" id="IPR045851">
    <property type="entry name" value="AMP-bd_C_sf"/>
</dbReference>
<dbReference type="InterPro" id="IPR020845">
    <property type="entry name" value="AMP-binding_CS"/>
</dbReference>
<dbReference type="InterPro" id="IPR000873">
    <property type="entry name" value="AMP-dep_synth/lig_dom"/>
</dbReference>
<dbReference type="PANTHER" id="PTHR43201">
    <property type="entry name" value="ACYL-COA SYNTHETASE"/>
    <property type="match status" value="1"/>
</dbReference>
<dbReference type="PANTHER" id="PTHR43201:SF8">
    <property type="entry name" value="ACYL-COA SYNTHETASE FAMILY MEMBER 3"/>
    <property type="match status" value="1"/>
</dbReference>
<dbReference type="Pfam" id="PF00501">
    <property type="entry name" value="AMP-binding"/>
    <property type="match status" value="1"/>
</dbReference>
<dbReference type="Pfam" id="PF13193">
    <property type="entry name" value="AMP-binding_C"/>
    <property type="match status" value="1"/>
</dbReference>
<dbReference type="SUPFAM" id="SSF56801">
    <property type="entry name" value="Acetyl-CoA synthetase-like"/>
    <property type="match status" value="1"/>
</dbReference>
<dbReference type="PROSITE" id="PS00455">
    <property type="entry name" value="AMP_BINDING"/>
    <property type="match status" value="1"/>
</dbReference>
<feature type="chain" id="PRO_0000401169" description="4-chlorobenzoate--CoA ligase">
    <location>
        <begin position="1"/>
        <end position="528"/>
    </location>
</feature>
<feature type="binding site" evidence="1">
    <location>
        <begin position="161"/>
        <end position="169"/>
    </location>
    <ligand>
        <name>ATP</name>
        <dbReference type="ChEBI" id="CHEBI:30616"/>
    </ligand>
</feature>
<feature type="binding site" evidence="1">
    <location>
        <begin position="300"/>
        <end position="305"/>
    </location>
    <ligand>
        <name>ATP</name>
        <dbReference type="ChEBI" id="CHEBI:30616"/>
    </ligand>
</feature>
<feature type="binding site" evidence="1">
    <location>
        <position position="409"/>
    </location>
    <ligand>
        <name>ATP</name>
        <dbReference type="ChEBI" id="CHEBI:30616"/>
    </ligand>
</feature>
<feature type="mutagenesis site" description="Significantly inhibits the adenylation part of the reaction." evidence="5">
    <original>G</original>
    <variation>I</variation>
    <location>
        <position position="163"/>
    </location>
</feature>
<feature type="mutagenesis site" description="Significantly inhibits the adenylation part of the reaction." evidence="5">
    <original>G</original>
    <variation>I</variation>
    <location>
        <position position="166"/>
    </location>
</feature>
<feature type="mutagenesis site" description="No catalytic activity." evidence="5">
    <original>P</original>
    <variation>A</variation>
    <location>
        <position position="168"/>
    </location>
</feature>
<feature type="mutagenesis site" description="Significantly inhibits the adenylation part of the reaction." evidence="5">
    <original>K</original>
    <variation>M</variation>
    <location>
        <position position="169"/>
    </location>
</feature>
<feature type="mutagenesis site" description="Significantly inhibits the adenylation part of the reaction." evidence="5">
    <original>E</original>
    <variation>Q</variation>
    <location>
        <position position="306"/>
    </location>
</feature>
<organism>
    <name type="scientific">Pseudomonas sp. (strain CBS-3)</name>
    <dbReference type="NCBI Taxonomy" id="72586"/>
    <lineage>
        <taxon>Bacteria</taxon>
        <taxon>Pseudomonadati</taxon>
        <taxon>Pseudomonadota</taxon>
    </lineage>
</organism>
<proteinExistence type="evidence at protein level"/>
<evidence type="ECO:0000250" key="1"/>
<evidence type="ECO:0000255" key="2"/>
<evidence type="ECO:0000269" key="3">
    <source>
    </source>
</evidence>
<evidence type="ECO:0000269" key="4">
    <source>
    </source>
</evidence>
<evidence type="ECO:0000269" key="5">
    <source>
    </source>
</evidence>
<evidence type="ECO:0000303" key="6">
    <source>
    </source>
</evidence>
<evidence type="ECO:0000303" key="7">
    <source>
    </source>
</evidence>
<evidence type="ECO:0000305" key="8"/>
<evidence type="ECO:0000312" key="9">
    <source>
        <dbReference type="EMBL" id="ABQ44579.1"/>
    </source>
</evidence>
<keyword id="KW-0067">ATP-binding</keyword>
<keyword id="KW-0903">Direct protein sequencing</keyword>
<keyword id="KW-0436">Ligase</keyword>
<keyword id="KW-0547">Nucleotide-binding</keyword>